<feature type="chain" id="PRO_0000351276" description="Copper chaperone CopZ">
    <location>
        <begin position="1"/>
        <end position="68"/>
    </location>
</feature>
<feature type="domain" description="HMA" evidence="2">
    <location>
        <begin position="2"/>
        <end position="68"/>
    </location>
</feature>
<feature type="binding site" evidence="2">
    <location>
        <position position="13"/>
    </location>
    <ligand>
        <name>Cu cation</name>
        <dbReference type="ChEBI" id="CHEBI:23378"/>
    </ligand>
</feature>
<feature type="binding site" evidence="2">
    <location>
        <position position="16"/>
    </location>
    <ligand>
        <name>Cu cation</name>
        <dbReference type="ChEBI" id="CHEBI:23378"/>
    </ligand>
</feature>
<reference key="1">
    <citation type="journal article" date="2008" name="Antimicrob. Agents Chemother.">
        <title>Mutated response regulator graR is responsible for phenotypic conversion of Staphylococcus aureus from heterogeneous vancomycin-intermediate resistance to vancomycin-intermediate resistance.</title>
        <authorList>
            <person name="Neoh H.-M."/>
            <person name="Cui L."/>
            <person name="Yuzawa H."/>
            <person name="Takeuchi F."/>
            <person name="Matsuo M."/>
            <person name="Hiramatsu K."/>
        </authorList>
    </citation>
    <scope>NUCLEOTIDE SEQUENCE [LARGE SCALE GENOMIC DNA]</scope>
    <source>
        <strain>Mu3 / ATCC 700698</strain>
    </source>
</reference>
<dbReference type="EMBL" id="AP009324">
    <property type="protein sequence ID" value="BAF79425.1"/>
    <property type="molecule type" value="Genomic_DNA"/>
</dbReference>
<dbReference type="RefSeq" id="WP_000076661.1">
    <property type="nucleotide sequence ID" value="NC_009782.1"/>
</dbReference>
<dbReference type="SMR" id="A7X6S3"/>
<dbReference type="KEGG" id="saw:SAHV_2542"/>
<dbReference type="HOGENOM" id="CLU_134973_10_4_9"/>
<dbReference type="GO" id="GO:0005737">
    <property type="term" value="C:cytoplasm"/>
    <property type="evidence" value="ECO:0007669"/>
    <property type="project" value="UniProtKB-SubCell"/>
</dbReference>
<dbReference type="GO" id="GO:0005507">
    <property type="term" value="F:copper ion binding"/>
    <property type="evidence" value="ECO:0007669"/>
    <property type="project" value="InterPro"/>
</dbReference>
<dbReference type="CDD" id="cd00371">
    <property type="entry name" value="HMA"/>
    <property type="match status" value="1"/>
</dbReference>
<dbReference type="FunFam" id="3.30.70.100:FF:000005">
    <property type="entry name" value="Copper-exporting P-type ATPase A"/>
    <property type="match status" value="1"/>
</dbReference>
<dbReference type="Gene3D" id="3.30.70.100">
    <property type="match status" value="1"/>
</dbReference>
<dbReference type="InterPro" id="IPR049740">
    <property type="entry name" value="CopZ"/>
</dbReference>
<dbReference type="InterPro" id="IPR017969">
    <property type="entry name" value="Heavy-metal-associated_CS"/>
</dbReference>
<dbReference type="InterPro" id="IPR006122">
    <property type="entry name" value="HMA_Cu_ion-bd"/>
</dbReference>
<dbReference type="InterPro" id="IPR006121">
    <property type="entry name" value="HMA_dom"/>
</dbReference>
<dbReference type="InterPro" id="IPR036163">
    <property type="entry name" value="HMA_dom_sf"/>
</dbReference>
<dbReference type="InterPro" id="IPR001802">
    <property type="entry name" value="MerP/CopZ"/>
</dbReference>
<dbReference type="NCBIfam" id="NF033795">
    <property type="entry name" value="chaper_CopZ_Bs"/>
    <property type="match status" value="1"/>
</dbReference>
<dbReference type="NCBIfam" id="TIGR00003">
    <property type="entry name" value="copper ion binding protein"/>
    <property type="match status" value="1"/>
</dbReference>
<dbReference type="PANTHER" id="PTHR46594">
    <property type="entry name" value="P-TYPE CATION-TRANSPORTING ATPASE"/>
    <property type="match status" value="1"/>
</dbReference>
<dbReference type="PANTHER" id="PTHR46594:SF4">
    <property type="entry name" value="P-TYPE CATION-TRANSPORTING ATPASE"/>
    <property type="match status" value="1"/>
</dbReference>
<dbReference type="Pfam" id="PF00403">
    <property type="entry name" value="HMA"/>
    <property type="match status" value="1"/>
</dbReference>
<dbReference type="PRINTS" id="PR00946">
    <property type="entry name" value="HGSCAVENGER"/>
</dbReference>
<dbReference type="SUPFAM" id="SSF55008">
    <property type="entry name" value="HMA, heavy metal-associated domain"/>
    <property type="match status" value="1"/>
</dbReference>
<dbReference type="PROSITE" id="PS01047">
    <property type="entry name" value="HMA_1"/>
    <property type="match status" value="1"/>
</dbReference>
<dbReference type="PROSITE" id="PS50846">
    <property type="entry name" value="HMA_2"/>
    <property type="match status" value="1"/>
</dbReference>
<organism>
    <name type="scientific">Staphylococcus aureus (strain Mu3 / ATCC 700698)</name>
    <dbReference type="NCBI Taxonomy" id="418127"/>
    <lineage>
        <taxon>Bacteria</taxon>
        <taxon>Bacillati</taxon>
        <taxon>Bacillota</taxon>
        <taxon>Bacilli</taxon>
        <taxon>Bacillales</taxon>
        <taxon>Staphylococcaceae</taxon>
        <taxon>Staphylococcus</taxon>
    </lineage>
</organism>
<protein>
    <recommendedName>
        <fullName>Copper chaperone CopZ</fullName>
    </recommendedName>
</protein>
<accession>A7X6S3</accession>
<sequence>MSQEILNVEGMSCGHCKSAVESALNNIDGVTSADVNLENGQVSVQYDDSKVAVSQMKDAIEDQGYDVV</sequence>
<comment type="function">
    <text evidence="1">Chaperone that serves for the intracellular sequestration and transport of Cu(+). Delivers Cu(+) to the copper-exporting P-type ATPase A (CopA) (By similarity).</text>
</comment>
<comment type="subcellular location">
    <subcellularLocation>
        <location evidence="1">Cytoplasm</location>
    </subcellularLocation>
</comment>
<keyword id="KW-0143">Chaperone</keyword>
<keyword id="KW-0186">Copper</keyword>
<keyword id="KW-0963">Cytoplasm</keyword>
<keyword id="KW-0479">Metal-binding</keyword>
<proteinExistence type="inferred from homology"/>
<evidence type="ECO:0000250" key="1"/>
<evidence type="ECO:0000255" key="2">
    <source>
        <dbReference type="PROSITE-ProRule" id="PRU00280"/>
    </source>
</evidence>
<name>COPZ_STAA1</name>
<gene>
    <name type="primary">copZ</name>
    <name type="ordered locus">SAHV_2542</name>
</gene>